<accession>A0LRL4</accession>
<gene>
    <name evidence="1" type="primary">rpoC</name>
    <name type="ordered locus">Acel_0300</name>
</gene>
<proteinExistence type="inferred from homology"/>
<name>RPOC_ACIC1</name>
<comment type="function">
    <text evidence="1">DNA-dependent RNA polymerase catalyzes the transcription of DNA into RNA using the four ribonucleoside triphosphates as substrates.</text>
</comment>
<comment type="catalytic activity">
    <reaction evidence="1">
        <text>RNA(n) + a ribonucleoside 5'-triphosphate = RNA(n+1) + diphosphate</text>
        <dbReference type="Rhea" id="RHEA:21248"/>
        <dbReference type="Rhea" id="RHEA-COMP:14527"/>
        <dbReference type="Rhea" id="RHEA-COMP:17342"/>
        <dbReference type="ChEBI" id="CHEBI:33019"/>
        <dbReference type="ChEBI" id="CHEBI:61557"/>
        <dbReference type="ChEBI" id="CHEBI:140395"/>
        <dbReference type="EC" id="2.7.7.6"/>
    </reaction>
</comment>
<comment type="cofactor">
    <cofactor evidence="1">
        <name>Mg(2+)</name>
        <dbReference type="ChEBI" id="CHEBI:18420"/>
    </cofactor>
    <text evidence="1">Binds 1 Mg(2+) ion per subunit.</text>
</comment>
<comment type="cofactor">
    <cofactor evidence="1">
        <name>Zn(2+)</name>
        <dbReference type="ChEBI" id="CHEBI:29105"/>
    </cofactor>
    <text evidence="1">Binds 2 Zn(2+) ions per subunit.</text>
</comment>
<comment type="subunit">
    <text evidence="1">The RNAP catalytic core consists of 2 alpha, 1 beta, 1 beta' and 1 omega subunit. When a sigma factor is associated with the core the holoenzyme is formed, which can initiate transcription.</text>
</comment>
<comment type="similarity">
    <text evidence="1">Belongs to the RNA polymerase beta' chain family.</text>
</comment>
<organism>
    <name type="scientific">Acidothermus cellulolyticus (strain ATCC 43068 / DSM 8971 / 11B)</name>
    <dbReference type="NCBI Taxonomy" id="351607"/>
    <lineage>
        <taxon>Bacteria</taxon>
        <taxon>Bacillati</taxon>
        <taxon>Actinomycetota</taxon>
        <taxon>Actinomycetes</taxon>
        <taxon>Acidothermales</taxon>
        <taxon>Acidothermaceae</taxon>
        <taxon>Acidothermus</taxon>
    </lineage>
</organism>
<evidence type="ECO:0000255" key="1">
    <source>
        <dbReference type="HAMAP-Rule" id="MF_01322"/>
    </source>
</evidence>
<dbReference type="EC" id="2.7.7.6" evidence="1"/>
<dbReference type="EMBL" id="CP000481">
    <property type="protein sequence ID" value="ABK52074.1"/>
    <property type="molecule type" value="Genomic_DNA"/>
</dbReference>
<dbReference type="RefSeq" id="WP_011719137.1">
    <property type="nucleotide sequence ID" value="NC_008578.1"/>
</dbReference>
<dbReference type="SMR" id="A0LRL4"/>
<dbReference type="FunCoup" id="A0LRL4">
    <property type="interactions" value="311"/>
</dbReference>
<dbReference type="STRING" id="351607.Acel_0300"/>
<dbReference type="KEGG" id="ace:Acel_0300"/>
<dbReference type="eggNOG" id="COG0086">
    <property type="taxonomic scope" value="Bacteria"/>
</dbReference>
<dbReference type="HOGENOM" id="CLU_000524_3_1_11"/>
<dbReference type="InParanoid" id="A0LRL4"/>
<dbReference type="OrthoDB" id="9815296at2"/>
<dbReference type="Proteomes" id="UP000008221">
    <property type="component" value="Chromosome"/>
</dbReference>
<dbReference type="GO" id="GO:0000428">
    <property type="term" value="C:DNA-directed RNA polymerase complex"/>
    <property type="evidence" value="ECO:0007669"/>
    <property type="project" value="UniProtKB-KW"/>
</dbReference>
<dbReference type="GO" id="GO:0003677">
    <property type="term" value="F:DNA binding"/>
    <property type="evidence" value="ECO:0007669"/>
    <property type="project" value="UniProtKB-UniRule"/>
</dbReference>
<dbReference type="GO" id="GO:0003899">
    <property type="term" value="F:DNA-directed RNA polymerase activity"/>
    <property type="evidence" value="ECO:0007669"/>
    <property type="project" value="UniProtKB-UniRule"/>
</dbReference>
<dbReference type="GO" id="GO:0000287">
    <property type="term" value="F:magnesium ion binding"/>
    <property type="evidence" value="ECO:0007669"/>
    <property type="project" value="UniProtKB-UniRule"/>
</dbReference>
<dbReference type="GO" id="GO:0008270">
    <property type="term" value="F:zinc ion binding"/>
    <property type="evidence" value="ECO:0007669"/>
    <property type="project" value="UniProtKB-UniRule"/>
</dbReference>
<dbReference type="GO" id="GO:0006351">
    <property type="term" value="P:DNA-templated transcription"/>
    <property type="evidence" value="ECO:0007669"/>
    <property type="project" value="UniProtKB-UniRule"/>
</dbReference>
<dbReference type="CDD" id="cd02655">
    <property type="entry name" value="RNAP_beta'_C"/>
    <property type="match status" value="1"/>
</dbReference>
<dbReference type="CDD" id="cd01609">
    <property type="entry name" value="RNAP_beta'_N"/>
    <property type="match status" value="1"/>
</dbReference>
<dbReference type="FunFam" id="1.10.150.390:FF:000002">
    <property type="entry name" value="DNA-directed RNA polymerase subunit beta"/>
    <property type="match status" value="1"/>
</dbReference>
<dbReference type="FunFam" id="4.10.860.120:FF:000001">
    <property type="entry name" value="DNA-directed RNA polymerase subunit beta"/>
    <property type="match status" value="1"/>
</dbReference>
<dbReference type="Gene3D" id="1.10.132.30">
    <property type="match status" value="1"/>
</dbReference>
<dbReference type="Gene3D" id="1.10.150.390">
    <property type="match status" value="1"/>
</dbReference>
<dbReference type="Gene3D" id="1.10.1790.20">
    <property type="match status" value="1"/>
</dbReference>
<dbReference type="Gene3D" id="1.10.40.90">
    <property type="match status" value="1"/>
</dbReference>
<dbReference type="Gene3D" id="2.40.40.20">
    <property type="match status" value="1"/>
</dbReference>
<dbReference type="Gene3D" id="2.40.50.100">
    <property type="match status" value="1"/>
</dbReference>
<dbReference type="Gene3D" id="4.10.860.120">
    <property type="entry name" value="RNA polymerase II, clamp domain"/>
    <property type="match status" value="1"/>
</dbReference>
<dbReference type="Gene3D" id="1.10.274.100">
    <property type="entry name" value="RNA polymerase Rpb1, domain 3"/>
    <property type="match status" value="2"/>
</dbReference>
<dbReference type="HAMAP" id="MF_01322">
    <property type="entry name" value="RNApol_bact_RpoC"/>
    <property type="match status" value="1"/>
</dbReference>
<dbReference type="InterPro" id="IPR045867">
    <property type="entry name" value="DNA-dir_RpoC_beta_prime"/>
</dbReference>
<dbReference type="InterPro" id="IPR012754">
    <property type="entry name" value="DNA-dir_RpoC_beta_prime_bact"/>
</dbReference>
<dbReference type="InterPro" id="IPR000722">
    <property type="entry name" value="RNA_pol_asu"/>
</dbReference>
<dbReference type="InterPro" id="IPR006592">
    <property type="entry name" value="RNA_pol_N"/>
</dbReference>
<dbReference type="InterPro" id="IPR007080">
    <property type="entry name" value="RNA_pol_Rpb1_1"/>
</dbReference>
<dbReference type="InterPro" id="IPR007066">
    <property type="entry name" value="RNA_pol_Rpb1_3"/>
</dbReference>
<dbReference type="InterPro" id="IPR042102">
    <property type="entry name" value="RNA_pol_Rpb1_3_sf"/>
</dbReference>
<dbReference type="InterPro" id="IPR007083">
    <property type="entry name" value="RNA_pol_Rpb1_4"/>
</dbReference>
<dbReference type="InterPro" id="IPR007081">
    <property type="entry name" value="RNA_pol_Rpb1_5"/>
</dbReference>
<dbReference type="InterPro" id="IPR044893">
    <property type="entry name" value="RNA_pol_Rpb1_clamp_domain"/>
</dbReference>
<dbReference type="InterPro" id="IPR038120">
    <property type="entry name" value="Rpb1_funnel_sf"/>
</dbReference>
<dbReference type="NCBIfam" id="NF011498">
    <property type="entry name" value="PRK14906.1"/>
    <property type="match status" value="1"/>
</dbReference>
<dbReference type="NCBIfam" id="TIGR02386">
    <property type="entry name" value="rpoC_TIGR"/>
    <property type="match status" value="1"/>
</dbReference>
<dbReference type="PANTHER" id="PTHR19376">
    <property type="entry name" value="DNA-DIRECTED RNA POLYMERASE"/>
    <property type="match status" value="1"/>
</dbReference>
<dbReference type="PANTHER" id="PTHR19376:SF54">
    <property type="entry name" value="DNA-DIRECTED RNA POLYMERASE SUBUNIT BETA"/>
    <property type="match status" value="1"/>
</dbReference>
<dbReference type="Pfam" id="PF04997">
    <property type="entry name" value="RNA_pol_Rpb1_1"/>
    <property type="match status" value="1"/>
</dbReference>
<dbReference type="Pfam" id="PF00623">
    <property type="entry name" value="RNA_pol_Rpb1_2"/>
    <property type="match status" value="1"/>
</dbReference>
<dbReference type="Pfam" id="PF04983">
    <property type="entry name" value="RNA_pol_Rpb1_3"/>
    <property type="match status" value="1"/>
</dbReference>
<dbReference type="Pfam" id="PF05000">
    <property type="entry name" value="RNA_pol_Rpb1_4"/>
    <property type="match status" value="1"/>
</dbReference>
<dbReference type="Pfam" id="PF04998">
    <property type="entry name" value="RNA_pol_Rpb1_5"/>
    <property type="match status" value="1"/>
</dbReference>
<dbReference type="SMART" id="SM00663">
    <property type="entry name" value="RPOLA_N"/>
    <property type="match status" value="1"/>
</dbReference>
<dbReference type="SUPFAM" id="SSF64484">
    <property type="entry name" value="beta and beta-prime subunits of DNA dependent RNA-polymerase"/>
    <property type="match status" value="1"/>
</dbReference>
<feature type="chain" id="PRO_0000308896" description="DNA-directed RNA polymerase subunit beta'">
    <location>
        <begin position="1"/>
        <end position="1304"/>
    </location>
</feature>
<feature type="binding site" evidence="1">
    <location>
        <position position="60"/>
    </location>
    <ligand>
        <name>Zn(2+)</name>
        <dbReference type="ChEBI" id="CHEBI:29105"/>
        <label>1</label>
    </ligand>
</feature>
<feature type="binding site" evidence="1">
    <location>
        <position position="62"/>
    </location>
    <ligand>
        <name>Zn(2+)</name>
        <dbReference type="ChEBI" id="CHEBI:29105"/>
        <label>1</label>
    </ligand>
</feature>
<feature type="binding site" evidence="1">
    <location>
        <position position="75"/>
    </location>
    <ligand>
        <name>Zn(2+)</name>
        <dbReference type="ChEBI" id="CHEBI:29105"/>
        <label>1</label>
    </ligand>
</feature>
<feature type="binding site" evidence="1">
    <location>
        <position position="78"/>
    </location>
    <ligand>
        <name>Zn(2+)</name>
        <dbReference type="ChEBI" id="CHEBI:29105"/>
        <label>1</label>
    </ligand>
</feature>
<feature type="binding site" evidence="1">
    <location>
        <position position="541"/>
    </location>
    <ligand>
        <name>Mg(2+)</name>
        <dbReference type="ChEBI" id="CHEBI:18420"/>
    </ligand>
</feature>
<feature type="binding site" evidence="1">
    <location>
        <position position="543"/>
    </location>
    <ligand>
        <name>Mg(2+)</name>
        <dbReference type="ChEBI" id="CHEBI:18420"/>
    </ligand>
</feature>
<feature type="binding site" evidence="1">
    <location>
        <position position="545"/>
    </location>
    <ligand>
        <name>Mg(2+)</name>
        <dbReference type="ChEBI" id="CHEBI:18420"/>
    </ligand>
</feature>
<feature type="binding site" evidence="1">
    <location>
        <position position="887"/>
    </location>
    <ligand>
        <name>Zn(2+)</name>
        <dbReference type="ChEBI" id="CHEBI:29105"/>
        <label>2</label>
    </ligand>
</feature>
<feature type="binding site" evidence="1">
    <location>
        <position position="963"/>
    </location>
    <ligand>
        <name>Zn(2+)</name>
        <dbReference type="ChEBI" id="CHEBI:29105"/>
        <label>2</label>
    </ligand>
</feature>
<feature type="binding site" evidence="1">
    <location>
        <position position="970"/>
    </location>
    <ligand>
        <name>Zn(2+)</name>
        <dbReference type="ChEBI" id="CHEBI:29105"/>
        <label>2</label>
    </ligand>
</feature>
<feature type="binding site" evidence="1">
    <location>
        <position position="973"/>
    </location>
    <ligand>
        <name>Zn(2+)</name>
        <dbReference type="ChEBI" id="CHEBI:29105"/>
        <label>2</label>
    </ligand>
</feature>
<reference key="1">
    <citation type="journal article" date="2009" name="Genome Res.">
        <title>Complete genome of the cellulolytic thermophile Acidothermus cellulolyticus 11B provides insights into its ecophysiological and evolutionary adaptations.</title>
        <authorList>
            <person name="Barabote R.D."/>
            <person name="Xie G."/>
            <person name="Leu D.H."/>
            <person name="Normand P."/>
            <person name="Necsulea A."/>
            <person name="Daubin V."/>
            <person name="Medigue C."/>
            <person name="Adney W.S."/>
            <person name="Xu X.C."/>
            <person name="Lapidus A."/>
            <person name="Parales R.E."/>
            <person name="Detter C."/>
            <person name="Pujic P."/>
            <person name="Bruce D."/>
            <person name="Lavire C."/>
            <person name="Challacombe J.F."/>
            <person name="Brettin T.S."/>
            <person name="Berry A.M."/>
        </authorList>
    </citation>
    <scope>NUCLEOTIDE SEQUENCE [LARGE SCALE GENOMIC DNA]</scope>
    <source>
        <strain>ATCC 43068 / DSM 8971 / 11B</strain>
    </source>
</reference>
<keyword id="KW-0240">DNA-directed RNA polymerase</keyword>
<keyword id="KW-0460">Magnesium</keyword>
<keyword id="KW-0479">Metal-binding</keyword>
<keyword id="KW-0548">Nucleotidyltransferase</keyword>
<keyword id="KW-1185">Reference proteome</keyword>
<keyword id="KW-0804">Transcription</keyword>
<keyword id="KW-0808">Transferase</keyword>
<keyword id="KW-0862">Zinc</keyword>
<sequence>MLDVNYFDELRIGLATADDIRQWSHGEVKKPETINYRTLRPEKDGLFCERIFGPTRDWECYCGKYKRVRFKGIICERCGVEVTRSKVRRERMGHIELAAPVTHIWYFKGVPSRLGYLLDLAPKDLEKVIYFAAYMITWVDEEARHRDLPSLEAQISVEKQEIEKRMNVELEERARKLEEDLAALEAEGAKADAKRKVREAAEREMRQIRERAQKEIDRIDEVFTRFKNLKVQDLEGDEVLYRELRDRFGQYFRGGMGAQAIKERLESFNLEAEAEALREQIRNGRGQKKARALKRLKVISAFLNTRNSPMGMVLDCIPVIPPDLRPMVQLDGGRFATSDLNDLYRRVINRNNRLKRLLDLGAPEIIVNNEKRMLQEAVDALFDNGRRGRPVTGPGNRPLKSLSDMLKGKQGRFRQNLLGKRVDYSGRSVIVVGPQLKLHQCGLPKVMALELFKPFVMKRLVDLNHAQNIKSAERMVERATSGLSRYAMVWDVLEEVIKEHPVLLNRAPTLHRLGIQAFEPQLVEGKAIQIHPLVCAAFNADFDGDQMAVHLPLSAEAQAEARILMLSSNNILKPADGRPVTMPSQDMVFGIYYLTTIKPGATGEGRVFSSDAEAIMARDLGELDIQAKIKVRLKDVVAVDDGTGSWTPPDGWQPGDPLLVETTLGRILFNEALPPDYRFINYELTKKDLSTIVNDLAERYPKVMVAACLDEMKTLGFHWATRAGVTISISDVVMPPRKQEILEAYEAKAEKVQRQYERGLITDDERRQELIEIWTQATADVAREMEANFPKDNPVFMMVNSGARGNMMQVRQIAGMRGLVANPKGEIIPRPIKSNFREGLSVLEYFISTHGARKGLADTALRTADSGYLTRRLVDVSQDVIVREEDCGTERAISMRIGVKGPDGTLTRLPTVETSVYARTLAEDVIVDGKVLAAKGSDIGDLTITELLAHGVEQVRVRSVLTCESKLGVCAACYGRSLASGKLVDVGEAVGIIAAQSIGEPGTQLTMRTFHTGGVAGEDITHGLPRVVELFEARTPKGVAPISEVTGRVKIEETEKARKIIITPDDGSEEVSYQVSKRARLRVAEGEHVEVGTQLVEGTVNPHEVLRILGPRAVQVHLVQEVQEVYRSQGVPIHDKHIEIIVRQMLKRVNILESGDTEFLPGELVERPKFEEENRRVVAEGGTPATARPVLMGITKASLATESWLSAASFQETTRVLTDAAINAKSDPLLGLKENVIIGKLIPAGTGMPRYRNIRVEPTEEARAAVYSMSGYDTGSYASGYGQFGTGSGQAVPLDDYDYGSYDR</sequence>
<protein>
    <recommendedName>
        <fullName evidence="1">DNA-directed RNA polymerase subunit beta'</fullName>
        <shortName evidence="1">RNAP subunit beta'</shortName>
        <ecNumber evidence="1">2.7.7.6</ecNumber>
    </recommendedName>
    <alternativeName>
        <fullName evidence="1">RNA polymerase subunit beta'</fullName>
    </alternativeName>
    <alternativeName>
        <fullName evidence="1">Transcriptase subunit beta'</fullName>
    </alternativeName>
</protein>